<sequence>MSDLRVRFAPSPTGYLHVGGARTALFNWLYARHFGGTFILRIEDTDTERSTQQSVDAILQGMEWLGLDWDEGPFYQTDNFPLYKQHVQKLLDEGKAYRCWCRPEELEAKREAAMAEGRKPKYDGTCRHRQDQPLDQPHVIRFKAPEEGETAFDDLIKGRIAFPNAELDDLIISRTDGTPTYNFCVVIDDALMRISHVIRGDDHVNNTPRQIQLYEALGYPVPIFAHVPMILGSDKARLSKRHGATSVIAYRDMGYLPEALNNYLVRLGWSNGDDEIFSREEMVQKFDIANVGRSPSVFNPDKLNWLNAHYIKTGNPARLAELLQPHLAGRGVADCSTPDLAGVISTLQERAQTLEEMAERALFYYQAPQQYDEAALSKFDKPHLAAVFSAVAARLSATTAAAAPEFDTLLKEICAEGGWKMPHVGQPLRIALSGSTQAPGIGEIITALGVNETIARIERAREFLAH</sequence>
<evidence type="ECO:0000255" key="1">
    <source>
        <dbReference type="HAMAP-Rule" id="MF_00022"/>
    </source>
</evidence>
<protein>
    <recommendedName>
        <fullName evidence="1">Glutamate--tRNA ligase</fullName>
        <ecNumber evidence="1">6.1.1.17</ecNumber>
    </recommendedName>
    <alternativeName>
        <fullName evidence="1">Glutamyl-tRNA synthetase</fullName>
        <shortName evidence="1">GluRS</shortName>
    </alternativeName>
</protein>
<name>SYE_TRIL1</name>
<feature type="chain" id="PRO_1000090078" description="Glutamate--tRNA ligase">
    <location>
        <begin position="1"/>
        <end position="466"/>
    </location>
</feature>
<feature type="short sequence motif" description="'HIGH' region" evidence="1">
    <location>
        <begin position="10"/>
        <end position="20"/>
    </location>
</feature>
<feature type="short sequence motif" description="'KMSKS' region" evidence="1">
    <location>
        <begin position="237"/>
        <end position="241"/>
    </location>
</feature>
<feature type="binding site" evidence="1">
    <location>
        <position position="99"/>
    </location>
    <ligand>
        <name>Zn(2+)</name>
        <dbReference type="ChEBI" id="CHEBI:29105"/>
    </ligand>
</feature>
<feature type="binding site" evidence="1">
    <location>
        <position position="101"/>
    </location>
    <ligand>
        <name>Zn(2+)</name>
        <dbReference type="ChEBI" id="CHEBI:29105"/>
    </ligand>
</feature>
<feature type="binding site" evidence="1">
    <location>
        <position position="126"/>
    </location>
    <ligand>
        <name>Zn(2+)</name>
        <dbReference type="ChEBI" id="CHEBI:29105"/>
    </ligand>
</feature>
<feature type="binding site" evidence="1">
    <location>
        <position position="128"/>
    </location>
    <ligand>
        <name>Zn(2+)</name>
        <dbReference type="ChEBI" id="CHEBI:29105"/>
    </ligand>
</feature>
<feature type="binding site" evidence="1">
    <location>
        <position position="240"/>
    </location>
    <ligand>
        <name>ATP</name>
        <dbReference type="ChEBI" id="CHEBI:30616"/>
    </ligand>
</feature>
<comment type="function">
    <text evidence="1">Catalyzes the attachment of glutamate to tRNA(Glu) in a two-step reaction: glutamate is first activated by ATP to form Glu-AMP and then transferred to the acceptor end of tRNA(Glu).</text>
</comment>
<comment type="catalytic activity">
    <reaction evidence="1">
        <text>tRNA(Glu) + L-glutamate + ATP = L-glutamyl-tRNA(Glu) + AMP + diphosphate</text>
        <dbReference type="Rhea" id="RHEA:23540"/>
        <dbReference type="Rhea" id="RHEA-COMP:9663"/>
        <dbReference type="Rhea" id="RHEA-COMP:9680"/>
        <dbReference type="ChEBI" id="CHEBI:29985"/>
        <dbReference type="ChEBI" id="CHEBI:30616"/>
        <dbReference type="ChEBI" id="CHEBI:33019"/>
        <dbReference type="ChEBI" id="CHEBI:78442"/>
        <dbReference type="ChEBI" id="CHEBI:78520"/>
        <dbReference type="ChEBI" id="CHEBI:456215"/>
        <dbReference type="EC" id="6.1.1.17"/>
    </reaction>
</comment>
<comment type="cofactor">
    <cofactor evidence="1">
        <name>Zn(2+)</name>
        <dbReference type="ChEBI" id="CHEBI:29105"/>
    </cofactor>
    <text evidence="1">Binds 1 zinc ion per subunit.</text>
</comment>
<comment type="subunit">
    <text evidence="1">Monomer.</text>
</comment>
<comment type="subcellular location">
    <subcellularLocation>
        <location evidence="1">Cytoplasm</location>
    </subcellularLocation>
</comment>
<comment type="similarity">
    <text evidence="1">Belongs to the class-I aminoacyl-tRNA synthetase family. Glutamate--tRNA ligase type 1 subfamily.</text>
</comment>
<gene>
    <name evidence="1" type="primary">gltX</name>
    <name type="ordered locus">Glov_0584</name>
</gene>
<organism>
    <name type="scientific">Trichlorobacter lovleyi (strain ATCC BAA-1151 / DSM 17278 / SZ)</name>
    <name type="common">Geobacter lovleyi</name>
    <dbReference type="NCBI Taxonomy" id="398767"/>
    <lineage>
        <taxon>Bacteria</taxon>
        <taxon>Pseudomonadati</taxon>
        <taxon>Thermodesulfobacteriota</taxon>
        <taxon>Desulfuromonadia</taxon>
        <taxon>Geobacterales</taxon>
        <taxon>Geobacteraceae</taxon>
        <taxon>Trichlorobacter</taxon>
    </lineage>
</organism>
<proteinExistence type="inferred from homology"/>
<keyword id="KW-0030">Aminoacyl-tRNA synthetase</keyword>
<keyword id="KW-0067">ATP-binding</keyword>
<keyword id="KW-0963">Cytoplasm</keyword>
<keyword id="KW-0436">Ligase</keyword>
<keyword id="KW-0479">Metal-binding</keyword>
<keyword id="KW-0547">Nucleotide-binding</keyword>
<keyword id="KW-0648">Protein biosynthesis</keyword>
<keyword id="KW-1185">Reference proteome</keyword>
<keyword id="KW-0862">Zinc</keyword>
<dbReference type="EC" id="6.1.1.17" evidence="1"/>
<dbReference type="EMBL" id="CP001089">
    <property type="protein sequence ID" value="ACD94311.1"/>
    <property type="molecule type" value="Genomic_DNA"/>
</dbReference>
<dbReference type="RefSeq" id="WP_012468667.1">
    <property type="nucleotide sequence ID" value="NC_010814.1"/>
</dbReference>
<dbReference type="SMR" id="B3E399"/>
<dbReference type="STRING" id="398767.Glov_0584"/>
<dbReference type="KEGG" id="glo:Glov_0584"/>
<dbReference type="eggNOG" id="COG0008">
    <property type="taxonomic scope" value="Bacteria"/>
</dbReference>
<dbReference type="HOGENOM" id="CLU_015768_6_0_7"/>
<dbReference type="OrthoDB" id="9807503at2"/>
<dbReference type="Proteomes" id="UP000002420">
    <property type="component" value="Chromosome"/>
</dbReference>
<dbReference type="GO" id="GO:0005829">
    <property type="term" value="C:cytosol"/>
    <property type="evidence" value="ECO:0007669"/>
    <property type="project" value="TreeGrafter"/>
</dbReference>
<dbReference type="GO" id="GO:0005524">
    <property type="term" value="F:ATP binding"/>
    <property type="evidence" value="ECO:0007669"/>
    <property type="project" value="UniProtKB-UniRule"/>
</dbReference>
<dbReference type="GO" id="GO:0004818">
    <property type="term" value="F:glutamate-tRNA ligase activity"/>
    <property type="evidence" value="ECO:0007669"/>
    <property type="project" value="UniProtKB-UniRule"/>
</dbReference>
<dbReference type="GO" id="GO:0000049">
    <property type="term" value="F:tRNA binding"/>
    <property type="evidence" value="ECO:0007669"/>
    <property type="project" value="InterPro"/>
</dbReference>
<dbReference type="GO" id="GO:0008270">
    <property type="term" value="F:zinc ion binding"/>
    <property type="evidence" value="ECO:0007669"/>
    <property type="project" value="UniProtKB-UniRule"/>
</dbReference>
<dbReference type="GO" id="GO:0006424">
    <property type="term" value="P:glutamyl-tRNA aminoacylation"/>
    <property type="evidence" value="ECO:0007669"/>
    <property type="project" value="UniProtKB-UniRule"/>
</dbReference>
<dbReference type="CDD" id="cd00808">
    <property type="entry name" value="GluRS_core"/>
    <property type="match status" value="1"/>
</dbReference>
<dbReference type="FunFam" id="3.40.50.620:FF:000007">
    <property type="entry name" value="Glutamate--tRNA ligase"/>
    <property type="match status" value="1"/>
</dbReference>
<dbReference type="Gene3D" id="1.10.10.350">
    <property type="match status" value="1"/>
</dbReference>
<dbReference type="Gene3D" id="3.40.50.620">
    <property type="entry name" value="HUPs"/>
    <property type="match status" value="1"/>
</dbReference>
<dbReference type="HAMAP" id="MF_00022">
    <property type="entry name" value="Glu_tRNA_synth_type1"/>
    <property type="match status" value="1"/>
</dbReference>
<dbReference type="InterPro" id="IPR045462">
    <property type="entry name" value="aa-tRNA-synth_I_cd-bd"/>
</dbReference>
<dbReference type="InterPro" id="IPR020751">
    <property type="entry name" value="aa-tRNA-synth_I_codon-bd_sub2"/>
</dbReference>
<dbReference type="InterPro" id="IPR001412">
    <property type="entry name" value="aa-tRNA-synth_I_CS"/>
</dbReference>
<dbReference type="InterPro" id="IPR008925">
    <property type="entry name" value="aa_tRNA-synth_I_cd-bd_sf"/>
</dbReference>
<dbReference type="InterPro" id="IPR004527">
    <property type="entry name" value="Glu-tRNA-ligase_bac/mito"/>
</dbReference>
<dbReference type="InterPro" id="IPR000924">
    <property type="entry name" value="Glu/Gln-tRNA-synth"/>
</dbReference>
<dbReference type="InterPro" id="IPR020058">
    <property type="entry name" value="Glu/Gln-tRNA-synth_Ib_cat-dom"/>
</dbReference>
<dbReference type="InterPro" id="IPR049940">
    <property type="entry name" value="GluQ/Sye"/>
</dbReference>
<dbReference type="InterPro" id="IPR033910">
    <property type="entry name" value="GluRS_core"/>
</dbReference>
<dbReference type="InterPro" id="IPR014729">
    <property type="entry name" value="Rossmann-like_a/b/a_fold"/>
</dbReference>
<dbReference type="NCBIfam" id="TIGR00464">
    <property type="entry name" value="gltX_bact"/>
    <property type="match status" value="1"/>
</dbReference>
<dbReference type="PANTHER" id="PTHR43311">
    <property type="entry name" value="GLUTAMATE--TRNA LIGASE"/>
    <property type="match status" value="1"/>
</dbReference>
<dbReference type="PANTHER" id="PTHR43311:SF2">
    <property type="entry name" value="GLUTAMATE--TRNA LIGASE, MITOCHONDRIAL-RELATED"/>
    <property type="match status" value="1"/>
</dbReference>
<dbReference type="Pfam" id="PF19269">
    <property type="entry name" value="Anticodon_2"/>
    <property type="match status" value="1"/>
</dbReference>
<dbReference type="Pfam" id="PF00749">
    <property type="entry name" value="tRNA-synt_1c"/>
    <property type="match status" value="1"/>
</dbReference>
<dbReference type="PRINTS" id="PR00987">
    <property type="entry name" value="TRNASYNTHGLU"/>
</dbReference>
<dbReference type="SUPFAM" id="SSF48163">
    <property type="entry name" value="An anticodon-binding domain of class I aminoacyl-tRNA synthetases"/>
    <property type="match status" value="1"/>
</dbReference>
<dbReference type="SUPFAM" id="SSF52374">
    <property type="entry name" value="Nucleotidylyl transferase"/>
    <property type="match status" value="1"/>
</dbReference>
<dbReference type="PROSITE" id="PS00178">
    <property type="entry name" value="AA_TRNA_LIGASE_I"/>
    <property type="match status" value="1"/>
</dbReference>
<accession>B3E399</accession>
<reference key="1">
    <citation type="submission" date="2008-05" db="EMBL/GenBank/DDBJ databases">
        <title>Complete sequence of chromosome of Geobacter lovleyi SZ.</title>
        <authorList>
            <consortium name="US DOE Joint Genome Institute"/>
            <person name="Lucas S."/>
            <person name="Copeland A."/>
            <person name="Lapidus A."/>
            <person name="Glavina del Rio T."/>
            <person name="Dalin E."/>
            <person name="Tice H."/>
            <person name="Bruce D."/>
            <person name="Goodwin L."/>
            <person name="Pitluck S."/>
            <person name="Chertkov O."/>
            <person name="Meincke L."/>
            <person name="Brettin T."/>
            <person name="Detter J.C."/>
            <person name="Han C."/>
            <person name="Tapia R."/>
            <person name="Kuske C.R."/>
            <person name="Schmutz J."/>
            <person name="Larimer F."/>
            <person name="Land M."/>
            <person name="Hauser L."/>
            <person name="Kyrpides N."/>
            <person name="Mikhailova N."/>
            <person name="Sung Y."/>
            <person name="Fletcher K.E."/>
            <person name="Ritalahti K.M."/>
            <person name="Loeffler F.E."/>
            <person name="Richardson P."/>
        </authorList>
    </citation>
    <scope>NUCLEOTIDE SEQUENCE [LARGE SCALE GENOMIC DNA]</scope>
    <source>
        <strain>ATCC BAA-1151 / DSM 17278 / SZ</strain>
    </source>
</reference>